<sequence>MAVHLTRIYTRTGDDGTTGLSDMSRVAKTDARLVAYADCDEANAAIGAALALGHPDTQITDVLRQIQNDLFDAGADLSTPIVENPKHPPLRIAQSYIDRLEGWCDAYNAGLPALKSFVLPGGSPLSALLHVARTVVRRAERSAWAAVDAHPEGVSVLPAKYLNRLSDLLFILSRVANPDGDVLWRPGGDRTAS</sequence>
<keyword id="KW-0067">ATP-binding</keyword>
<keyword id="KW-0169">Cobalamin biosynthesis</keyword>
<keyword id="KW-0963">Cytoplasm</keyword>
<keyword id="KW-0547">Nucleotide-binding</keyword>
<keyword id="KW-0627">Porphyrin biosynthesis</keyword>
<keyword id="KW-1185">Reference proteome</keyword>
<keyword id="KW-0808">Transferase</keyword>
<proteinExistence type="inferred from homology"/>
<reference key="1">
    <citation type="journal article" date="2003" name="Proc. Natl. Acad. Sci. U.S.A.">
        <title>The complete genome sequence of Mycobacterium bovis.</title>
        <authorList>
            <person name="Garnier T."/>
            <person name="Eiglmeier K."/>
            <person name="Camus J.-C."/>
            <person name="Medina N."/>
            <person name="Mansoor H."/>
            <person name="Pryor M."/>
            <person name="Duthoy S."/>
            <person name="Grondin S."/>
            <person name="Lacroix C."/>
            <person name="Monsempe C."/>
            <person name="Simon S."/>
            <person name="Harris B."/>
            <person name="Atkin R."/>
            <person name="Doggett J."/>
            <person name="Mayes R."/>
            <person name="Keating L."/>
            <person name="Wheeler P.R."/>
            <person name="Parkhill J."/>
            <person name="Barrell B.G."/>
            <person name="Cole S.T."/>
            <person name="Gordon S.V."/>
            <person name="Hewinson R.G."/>
        </authorList>
    </citation>
    <scope>NUCLEOTIDE SEQUENCE [LARGE SCALE GENOMIC DNA]</scope>
    <source>
        <strain>ATCC BAA-935 / AF2122/97</strain>
    </source>
</reference>
<reference key="2">
    <citation type="journal article" date="2017" name="Genome Announc.">
        <title>Updated reference genome sequence and annotation of Mycobacterium bovis AF2122/97.</title>
        <authorList>
            <person name="Malone K.M."/>
            <person name="Farrell D."/>
            <person name="Stuber T.P."/>
            <person name="Schubert O.T."/>
            <person name="Aebersold R."/>
            <person name="Robbe-Austerman S."/>
            <person name="Gordon S.V."/>
        </authorList>
    </citation>
    <scope>NUCLEOTIDE SEQUENCE [LARGE SCALE GENOMIC DNA]</scope>
    <scope>GENOME REANNOTATION</scope>
    <source>
        <strain>ATCC BAA-935 / AF2122/97</strain>
    </source>
</reference>
<organism>
    <name type="scientific">Mycobacterium bovis (strain ATCC BAA-935 / AF2122/97)</name>
    <dbReference type="NCBI Taxonomy" id="233413"/>
    <lineage>
        <taxon>Bacteria</taxon>
        <taxon>Bacillati</taxon>
        <taxon>Actinomycetota</taxon>
        <taxon>Actinomycetes</taxon>
        <taxon>Mycobacteriales</taxon>
        <taxon>Mycobacteriaceae</taxon>
        <taxon>Mycobacterium</taxon>
        <taxon>Mycobacterium tuberculosis complex</taxon>
    </lineage>
</organism>
<name>PDUO_MYCBO</name>
<comment type="catalytic activity">
    <reaction>
        <text>2 cob(II)yrinate a,c diamide + reduced [electron-transfer flavoprotein] + 2 ATP = 2 adenosylcob(III)yrinate a,c-diamide + 2 triphosphate + oxidized [electron-transfer flavoprotein] + 3 H(+)</text>
        <dbReference type="Rhea" id="RHEA:11528"/>
        <dbReference type="Rhea" id="RHEA-COMP:10685"/>
        <dbReference type="Rhea" id="RHEA-COMP:10686"/>
        <dbReference type="ChEBI" id="CHEBI:15378"/>
        <dbReference type="ChEBI" id="CHEBI:18036"/>
        <dbReference type="ChEBI" id="CHEBI:30616"/>
        <dbReference type="ChEBI" id="CHEBI:57692"/>
        <dbReference type="ChEBI" id="CHEBI:58307"/>
        <dbReference type="ChEBI" id="CHEBI:58503"/>
        <dbReference type="ChEBI" id="CHEBI:58537"/>
        <dbReference type="EC" id="2.5.1.17"/>
    </reaction>
</comment>
<comment type="catalytic activity">
    <reaction>
        <text>2 cob(II)alamin + reduced [electron-transfer flavoprotein] + 2 ATP = 2 adenosylcob(III)alamin + 2 triphosphate + oxidized [electron-transfer flavoprotein] + 3 H(+)</text>
        <dbReference type="Rhea" id="RHEA:28671"/>
        <dbReference type="Rhea" id="RHEA-COMP:10685"/>
        <dbReference type="Rhea" id="RHEA-COMP:10686"/>
        <dbReference type="ChEBI" id="CHEBI:15378"/>
        <dbReference type="ChEBI" id="CHEBI:16304"/>
        <dbReference type="ChEBI" id="CHEBI:18036"/>
        <dbReference type="ChEBI" id="CHEBI:18408"/>
        <dbReference type="ChEBI" id="CHEBI:30616"/>
        <dbReference type="ChEBI" id="CHEBI:57692"/>
        <dbReference type="ChEBI" id="CHEBI:58307"/>
        <dbReference type="EC" id="2.5.1.17"/>
    </reaction>
</comment>
<comment type="pathway">
    <text>Cofactor biosynthesis; adenosylcobalamin biosynthesis; adenosylcobalamin from cob(II)yrinate a,c-diamide: step 2/7.</text>
</comment>
<comment type="subcellular location">
    <subcellularLocation>
        <location evidence="2">Cytoplasm</location>
    </subcellularLocation>
</comment>
<comment type="similarity">
    <text evidence="2">Belongs to the Cob(I)alamin adenosyltransferase family.</text>
</comment>
<feature type="chain" id="PRO_0000103799" description="Corrinoid adenosyltransferase">
    <location>
        <begin position="1"/>
        <end position="193"/>
    </location>
</feature>
<feature type="binding site" evidence="1">
    <location>
        <begin position="10"/>
        <end position="18"/>
    </location>
    <ligand>
        <name>ATP</name>
        <dbReference type="ChEBI" id="CHEBI:30616"/>
    </ligand>
</feature>
<feature type="binding site" evidence="1">
    <location>
        <position position="28"/>
    </location>
    <ligand>
        <name>ATP</name>
        <dbReference type="ChEBI" id="CHEBI:30616"/>
    </ligand>
</feature>
<feature type="binding site" evidence="1">
    <location>
        <begin position="137"/>
        <end position="142"/>
    </location>
    <ligand>
        <name>ATP</name>
        <dbReference type="ChEBI" id="CHEBI:30616"/>
    </ligand>
</feature>
<feature type="binding site" evidence="1">
    <location>
        <position position="163"/>
    </location>
    <ligand>
        <name>ATP</name>
        <dbReference type="ChEBI" id="CHEBI:30616"/>
    </ligand>
</feature>
<evidence type="ECO:0000250" key="1"/>
<evidence type="ECO:0000305" key="2"/>
<protein>
    <recommendedName>
        <fullName>Corrinoid adenosyltransferase</fullName>
        <ecNumber>2.5.1.17</ecNumber>
    </recommendedName>
    <alternativeName>
        <fullName>Cob(II)alamin adenosyltransferase</fullName>
    </alternativeName>
    <alternativeName>
        <fullName>Cob(II)yrinic acid a,c-diamide adenosyltransferase</fullName>
    </alternativeName>
    <alternativeName>
        <fullName>Cobinamide/cobalamin adenosyltransferase</fullName>
    </alternativeName>
</protein>
<accession>P64804</accession>
<accession>A0A1R3XY13</accession>
<accession>Q10622</accession>
<accession>X2BHJ1</accession>
<dbReference type="EC" id="2.5.1.17"/>
<dbReference type="EMBL" id="LT708304">
    <property type="protein sequence ID" value="SIT99950.1"/>
    <property type="molecule type" value="Genomic_DNA"/>
</dbReference>
<dbReference type="RefSeq" id="NP_855001.1">
    <property type="nucleotide sequence ID" value="NC_002945.3"/>
</dbReference>
<dbReference type="RefSeq" id="WP_003406839.1">
    <property type="nucleotide sequence ID" value="NC_002945.4"/>
</dbReference>
<dbReference type="SMR" id="P64804"/>
<dbReference type="KEGG" id="mbo:BQ2027_MB1347C"/>
<dbReference type="PATRIC" id="fig|233413.5.peg.1476"/>
<dbReference type="UniPathway" id="UPA00148">
    <property type="reaction ID" value="UER00233"/>
</dbReference>
<dbReference type="Proteomes" id="UP000001419">
    <property type="component" value="Chromosome"/>
</dbReference>
<dbReference type="GO" id="GO:0005737">
    <property type="term" value="C:cytoplasm"/>
    <property type="evidence" value="ECO:0007669"/>
    <property type="project" value="UniProtKB-SubCell"/>
</dbReference>
<dbReference type="GO" id="GO:0005524">
    <property type="term" value="F:ATP binding"/>
    <property type="evidence" value="ECO:0007669"/>
    <property type="project" value="UniProtKB-KW"/>
</dbReference>
<dbReference type="GO" id="GO:0008817">
    <property type="term" value="F:corrinoid adenosyltransferase activity"/>
    <property type="evidence" value="ECO:0007669"/>
    <property type="project" value="UniProtKB-EC"/>
</dbReference>
<dbReference type="GO" id="GO:0009236">
    <property type="term" value="P:cobalamin biosynthetic process"/>
    <property type="evidence" value="ECO:0007669"/>
    <property type="project" value="UniProtKB-UniPathway"/>
</dbReference>
<dbReference type="GO" id="GO:0006779">
    <property type="term" value="P:porphyrin-containing compound biosynthetic process"/>
    <property type="evidence" value="ECO:0007669"/>
    <property type="project" value="UniProtKB-KW"/>
</dbReference>
<dbReference type="FunFam" id="1.20.1200.10:FF:000003">
    <property type="entry name" value="ATP:cob(I)alamin adenosyltransferase"/>
    <property type="match status" value="1"/>
</dbReference>
<dbReference type="Gene3D" id="1.20.1200.10">
    <property type="entry name" value="Cobalamin adenosyltransferase-like"/>
    <property type="match status" value="1"/>
</dbReference>
<dbReference type="InterPro" id="IPR016030">
    <property type="entry name" value="CblAdoTrfase-like"/>
</dbReference>
<dbReference type="InterPro" id="IPR036451">
    <property type="entry name" value="CblAdoTrfase-like_sf"/>
</dbReference>
<dbReference type="InterPro" id="IPR029499">
    <property type="entry name" value="PduO-typ"/>
</dbReference>
<dbReference type="NCBIfam" id="TIGR00636">
    <property type="entry name" value="PduO_Nterm"/>
    <property type="match status" value="1"/>
</dbReference>
<dbReference type="PANTHER" id="PTHR12213">
    <property type="entry name" value="CORRINOID ADENOSYLTRANSFERASE"/>
    <property type="match status" value="1"/>
</dbReference>
<dbReference type="PANTHER" id="PTHR12213:SF0">
    <property type="entry name" value="CORRINOID ADENOSYLTRANSFERASE MMAB"/>
    <property type="match status" value="1"/>
</dbReference>
<dbReference type="Pfam" id="PF01923">
    <property type="entry name" value="Cob_adeno_trans"/>
    <property type="match status" value="1"/>
</dbReference>
<dbReference type="SUPFAM" id="SSF89028">
    <property type="entry name" value="Cobalamin adenosyltransferase-like"/>
    <property type="match status" value="1"/>
</dbReference>
<gene>
    <name type="ordered locus">BQ2027_MB1347C</name>
</gene>